<gene>
    <name type="primary">ypbD</name>
    <name type="ordered locus">BSU23010</name>
</gene>
<name>YPBD_BACSU</name>
<proteinExistence type="predicted"/>
<accession>P50730</accession>
<organism>
    <name type="scientific">Bacillus subtilis (strain 168)</name>
    <dbReference type="NCBI Taxonomy" id="224308"/>
    <lineage>
        <taxon>Bacteria</taxon>
        <taxon>Bacillati</taxon>
        <taxon>Bacillota</taxon>
        <taxon>Bacilli</taxon>
        <taxon>Bacillales</taxon>
        <taxon>Bacillaceae</taxon>
        <taxon>Bacillus</taxon>
    </lineage>
</organism>
<comment type="subcellular location">
    <subcellularLocation>
        <location evidence="2">Cell membrane</location>
        <topology evidence="2">Multi-pass membrane protein</topology>
    </subcellularLocation>
</comment>
<protein>
    <recommendedName>
        <fullName>Uncharacterized protein YpbD</fullName>
    </recommendedName>
</protein>
<reference key="1">
    <citation type="journal article" date="1996" name="Microbiology">
        <title>Sequence analysis of the Bacillus subtilis chromosome region between the serA and kdg loci cloned in a yeast artificial chromosome.</title>
        <authorList>
            <person name="Sorokin A.V."/>
            <person name="Azevedo V."/>
            <person name="Zumstein E."/>
            <person name="Galleron N."/>
            <person name="Ehrlich S.D."/>
            <person name="Serror P."/>
        </authorList>
    </citation>
    <scope>NUCLEOTIDE SEQUENCE [GENOMIC DNA]</scope>
    <source>
        <strain>168 / Marburg / ATCC 6051 / DSM 10 / JCM 1465 / NBRC 13719 / NCIMB 3610 / NRRL NRS-744 / VKM B-501</strain>
    </source>
</reference>
<reference key="2">
    <citation type="journal article" date="1997" name="Nature">
        <title>The complete genome sequence of the Gram-positive bacterium Bacillus subtilis.</title>
        <authorList>
            <person name="Kunst F."/>
            <person name="Ogasawara N."/>
            <person name="Moszer I."/>
            <person name="Albertini A.M."/>
            <person name="Alloni G."/>
            <person name="Azevedo V."/>
            <person name="Bertero M.G."/>
            <person name="Bessieres P."/>
            <person name="Bolotin A."/>
            <person name="Borchert S."/>
            <person name="Borriss R."/>
            <person name="Boursier L."/>
            <person name="Brans A."/>
            <person name="Braun M."/>
            <person name="Brignell S.C."/>
            <person name="Bron S."/>
            <person name="Brouillet S."/>
            <person name="Bruschi C.V."/>
            <person name="Caldwell B."/>
            <person name="Capuano V."/>
            <person name="Carter N.M."/>
            <person name="Choi S.-K."/>
            <person name="Codani J.-J."/>
            <person name="Connerton I.F."/>
            <person name="Cummings N.J."/>
            <person name="Daniel R.A."/>
            <person name="Denizot F."/>
            <person name="Devine K.M."/>
            <person name="Duesterhoeft A."/>
            <person name="Ehrlich S.D."/>
            <person name="Emmerson P.T."/>
            <person name="Entian K.-D."/>
            <person name="Errington J."/>
            <person name="Fabret C."/>
            <person name="Ferrari E."/>
            <person name="Foulger D."/>
            <person name="Fritz C."/>
            <person name="Fujita M."/>
            <person name="Fujita Y."/>
            <person name="Fuma S."/>
            <person name="Galizzi A."/>
            <person name="Galleron N."/>
            <person name="Ghim S.-Y."/>
            <person name="Glaser P."/>
            <person name="Goffeau A."/>
            <person name="Golightly E.J."/>
            <person name="Grandi G."/>
            <person name="Guiseppi G."/>
            <person name="Guy B.J."/>
            <person name="Haga K."/>
            <person name="Haiech J."/>
            <person name="Harwood C.R."/>
            <person name="Henaut A."/>
            <person name="Hilbert H."/>
            <person name="Holsappel S."/>
            <person name="Hosono S."/>
            <person name="Hullo M.-F."/>
            <person name="Itaya M."/>
            <person name="Jones L.-M."/>
            <person name="Joris B."/>
            <person name="Karamata D."/>
            <person name="Kasahara Y."/>
            <person name="Klaerr-Blanchard M."/>
            <person name="Klein C."/>
            <person name="Kobayashi Y."/>
            <person name="Koetter P."/>
            <person name="Koningstein G."/>
            <person name="Krogh S."/>
            <person name="Kumano M."/>
            <person name="Kurita K."/>
            <person name="Lapidus A."/>
            <person name="Lardinois S."/>
            <person name="Lauber J."/>
            <person name="Lazarevic V."/>
            <person name="Lee S.-M."/>
            <person name="Levine A."/>
            <person name="Liu H."/>
            <person name="Masuda S."/>
            <person name="Mauel C."/>
            <person name="Medigue C."/>
            <person name="Medina N."/>
            <person name="Mellado R.P."/>
            <person name="Mizuno M."/>
            <person name="Moestl D."/>
            <person name="Nakai S."/>
            <person name="Noback M."/>
            <person name="Noone D."/>
            <person name="O'Reilly M."/>
            <person name="Ogawa K."/>
            <person name="Ogiwara A."/>
            <person name="Oudega B."/>
            <person name="Park S.-H."/>
            <person name="Parro V."/>
            <person name="Pohl T.M."/>
            <person name="Portetelle D."/>
            <person name="Porwollik S."/>
            <person name="Prescott A.M."/>
            <person name="Presecan E."/>
            <person name="Pujic P."/>
            <person name="Purnelle B."/>
            <person name="Rapoport G."/>
            <person name="Rey M."/>
            <person name="Reynolds S."/>
            <person name="Rieger M."/>
            <person name="Rivolta C."/>
            <person name="Rocha E."/>
            <person name="Roche B."/>
            <person name="Rose M."/>
            <person name="Sadaie Y."/>
            <person name="Sato T."/>
            <person name="Scanlan E."/>
            <person name="Schleich S."/>
            <person name="Schroeter R."/>
            <person name="Scoffone F."/>
            <person name="Sekiguchi J."/>
            <person name="Sekowska A."/>
            <person name="Seror S.J."/>
            <person name="Serror P."/>
            <person name="Shin B.-S."/>
            <person name="Soldo B."/>
            <person name="Sorokin A."/>
            <person name="Tacconi E."/>
            <person name="Takagi T."/>
            <person name="Takahashi H."/>
            <person name="Takemaru K."/>
            <person name="Takeuchi M."/>
            <person name="Tamakoshi A."/>
            <person name="Tanaka T."/>
            <person name="Terpstra P."/>
            <person name="Tognoni A."/>
            <person name="Tosato V."/>
            <person name="Uchiyama S."/>
            <person name="Vandenbol M."/>
            <person name="Vannier F."/>
            <person name="Vassarotti A."/>
            <person name="Viari A."/>
            <person name="Wambutt R."/>
            <person name="Wedler E."/>
            <person name="Wedler H."/>
            <person name="Weitzenegger T."/>
            <person name="Winters P."/>
            <person name="Wipat A."/>
            <person name="Yamamoto H."/>
            <person name="Yamane K."/>
            <person name="Yasumoto K."/>
            <person name="Yata K."/>
            <person name="Yoshida K."/>
            <person name="Yoshikawa H.-F."/>
            <person name="Zumstein E."/>
            <person name="Yoshikawa H."/>
            <person name="Danchin A."/>
        </authorList>
    </citation>
    <scope>NUCLEOTIDE SEQUENCE [LARGE SCALE GENOMIC DNA]</scope>
    <source>
        <strain>168</strain>
    </source>
</reference>
<dbReference type="EMBL" id="L47648">
    <property type="protein sequence ID" value="AAC83948.1"/>
    <property type="molecule type" value="Genomic_DNA"/>
</dbReference>
<dbReference type="EMBL" id="AL009126">
    <property type="protein sequence ID" value="CAB14217.1"/>
    <property type="molecule type" value="Genomic_DNA"/>
</dbReference>
<dbReference type="PIR" id="G69932">
    <property type="entry name" value="G69932"/>
</dbReference>
<dbReference type="RefSeq" id="NP_390182.1">
    <property type="nucleotide sequence ID" value="NC_000964.3"/>
</dbReference>
<dbReference type="RefSeq" id="WP_010886558.1">
    <property type="nucleotide sequence ID" value="NC_000964.3"/>
</dbReference>
<dbReference type="SMR" id="P50730"/>
<dbReference type="FunCoup" id="P50730">
    <property type="interactions" value="2"/>
</dbReference>
<dbReference type="STRING" id="224308.BSU23010"/>
<dbReference type="PaxDb" id="224308-BSU23010"/>
<dbReference type="EnsemblBacteria" id="CAB14217">
    <property type="protein sequence ID" value="CAB14217"/>
    <property type="gene ID" value="BSU_23010"/>
</dbReference>
<dbReference type="GeneID" id="938972"/>
<dbReference type="KEGG" id="bsu:BSU23010"/>
<dbReference type="PATRIC" id="fig|224308.43.peg.2400"/>
<dbReference type="eggNOG" id="COG1266">
    <property type="taxonomic scope" value="Bacteria"/>
</dbReference>
<dbReference type="InParanoid" id="P50730"/>
<dbReference type="OrthoDB" id="1523022at2"/>
<dbReference type="BioCyc" id="BSUB:BSU23010-MONOMER"/>
<dbReference type="Proteomes" id="UP000001570">
    <property type="component" value="Chromosome"/>
</dbReference>
<dbReference type="GO" id="GO:0005886">
    <property type="term" value="C:plasma membrane"/>
    <property type="evidence" value="ECO:0007669"/>
    <property type="project" value="UniProtKB-SubCell"/>
</dbReference>
<dbReference type="GO" id="GO:0004175">
    <property type="term" value="F:endopeptidase activity"/>
    <property type="evidence" value="ECO:0007669"/>
    <property type="project" value="UniProtKB-ARBA"/>
</dbReference>
<dbReference type="GO" id="GO:0080120">
    <property type="term" value="P:CAAX-box protein maturation"/>
    <property type="evidence" value="ECO:0007669"/>
    <property type="project" value="UniProtKB-ARBA"/>
</dbReference>
<dbReference type="InterPro" id="IPR003675">
    <property type="entry name" value="Rce1/LyrA-like_dom"/>
</dbReference>
<dbReference type="Pfam" id="PF02517">
    <property type="entry name" value="Rce1-like"/>
    <property type="match status" value="1"/>
</dbReference>
<keyword id="KW-1003">Cell membrane</keyword>
<keyword id="KW-0472">Membrane</keyword>
<keyword id="KW-1185">Reference proteome</keyword>
<keyword id="KW-0812">Transmembrane</keyword>
<keyword id="KW-1133">Transmembrane helix</keyword>
<sequence>MTQLLIIFAAAAAGLFFFEDVRDVLKLWDIRDMRIIWYGVSIAVIVILADMAVMKWFPSHLYDDGGINKKIFSKRSIPHIIFLTLLIAFAEEMLFRGVLQTHIGLWTASLIFAALHFRYLSKWLLFIMVTAISFLLGLMYEWTGNLFVPMTAHFIIDAVFACQIRFEHVRRDKHDEHVESREKKSPESL</sequence>
<feature type="chain" id="PRO_0000049678" description="Uncharacterized protein YpbD">
    <location>
        <begin position="1"/>
        <end position="189"/>
    </location>
</feature>
<feature type="transmembrane region" description="Helical" evidence="1">
    <location>
        <begin position="35"/>
        <end position="55"/>
    </location>
</feature>
<feature type="transmembrane region" description="Helical" evidence="1">
    <location>
        <begin position="97"/>
        <end position="117"/>
    </location>
</feature>
<feature type="transmembrane region" description="Helical" evidence="1">
    <location>
        <begin position="123"/>
        <end position="143"/>
    </location>
</feature>
<feature type="transmembrane region" description="Helical" evidence="1">
    <location>
        <begin position="144"/>
        <end position="164"/>
    </location>
</feature>
<evidence type="ECO:0000255" key="1"/>
<evidence type="ECO:0000305" key="2"/>